<organism>
    <name type="scientific">Geobacillus sp. (strain PA-9)</name>
    <dbReference type="NCBI Taxonomy" id="278858"/>
    <lineage>
        <taxon>Bacteria</taxon>
        <taxon>Bacillati</taxon>
        <taxon>Bacillota</taxon>
        <taxon>Bacilli</taxon>
        <taxon>Bacillales</taxon>
        <taxon>Anoxybacillaceae</taxon>
        <taxon>Geobacillus</taxon>
    </lineage>
</organism>
<protein>
    <recommendedName>
        <fullName>4-hydroxyphenylacetate 3-monooxygenase oxygenase component</fullName>
        <ecNumber>1.14.14.9</ecNumber>
    </recommendedName>
    <alternativeName>
        <fullName>4-HPA 3-hydroxylase</fullName>
    </alternativeName>
    <alternativeName>
        <fullName>4-hydroxyphenylacetate-3-hydroxylase</fullName>
    </alternativeName>
</protein>
<proteinExistence type="inferred from homology"/>
<dbReference type="EC" id="1.14.14.9"/>
<dbReference type="EMBL" id="AY549312">
    <property type="protein sequence ID" value="AAT28189.1"/>
    <property type="molecule type" value="Genomic_DNA"/>
</dbReference>
<dbReference type="SMR" id="Q4L1M7"/>
<dbReference type="BRENDA" id="1.14.14.9">
    <property type="organism ID" value="7484"/>
</dbReference>
<dbReference type="UniPathway" id="UPA00208">
    <property type="reaction ID" value="UER00416"/>
</dbReference>
<dbReference type="GO" id="GO:0052881">
    <property type="term" value="F:4-hydroxyphenylacetate 3-monooxygenase activity"/>
    <property type="evidence" value="ECO:0007669"/>
    <property type="project" value="UniProtKB-EC"/>
</dbReference>
<dbReference type="GO" id="GO:0050660">
    <property type="term" value="F:flavin adenine dinucleotide binding"/>
    <property type="evidence" value="ECO:0007669"/>
    <property type="project" value="InterPro"/>
</dbReference>
<dbReference type="GO" id="GO:0016627">
    <property type="term" value="F:oxidoreductase activity, acting on the CH-CH group of donors"/>
    <property type="evidence" value="ECO:0007669"/>
    <property type="project" value="InterPro"/>
</dbReference>
<dbReference type="GO" id="GO:0010124">
    <property type="term" value="P:phenylacetate catabolic process"/>
    <property type="evidence" value="ECO:0007669"/>
    <property type="project" value="InterPro"/>
</dbReference>
<dbReference type="Gene3D" id="1.10.3140.10">
    <property type="entry name" value="4-hydroxybutyryl-coa dehydratase, domain 1"/>
    <property type="match status" value="1"/>
</dbReference>
<dbReference type="Gene3D" id="2.40.110.10">
    <property type="entry name" value="Butyryl-CoA Dehydrogenase, subunit A, domain 2"/>
    <property type="match status" value="1"/>
</dbReference>
<dbReference type="Gene3D" id="1.20.140.10">
    <property type="entry name" value="Butyryl-CoA Dehydrogenase, subunit A, domain 3"/>
    <property type="match status" value="1"/>
</dbReference>
<dbReference type="InterPro" id="IPR046373">
    <property type="entry name" value="Acyl-CoA_Oxase/DH_mid-dom_sf"/>
</dbReference>
<dbReference type="InterPro" id="IPR036250">
    <property type="entry name" value="AcylCo_DH-like_C"/>
</dbReference>
<dbReference type="InterPro" id="IPR009100">
    <property type="entry name" value="AcylCoA_DH/oxidase_NM_dom_sf"/>
</dbReference>
<dbReference type="InterPro" id="IPR004925">
    <property type="entry name" value="HpaB/PvcC/4-BUDH"/>
</dbReference>
<dbReference type="InterPro" id="IPR024719">
    <property type="entry name" value="HpaB/PvcC/4-BUDH_C"/>
</dbReference>
<dbReference type="InterPro" id="IPR024674">
    <property type="entry name" value="HpaB/PvcC/4-BUDH_N"/>
</dbReference>
<dbReference type="InterPro" id="IPR012687">
    <property type="entry name" value="HpaB_Deino-type"/>
</dbReference>
<dbReference type="NCBIfam" id="TIGR02309">
    <property type="entry name" value="HpaB-1"/>
    <property type="match status" value="1"/>
</dbReference>
<dbReference type="PANTHER" id="PTHR36117">
    <property type="entry name" value="4-HYDROXYPHENYLACETATE 3-MONOOXYGENASE-RELATED"/>
    <property type="match status" value="1"/>
</dbReference>
<dbReference type="PANTHER" id="PTHR36117:SF3">
    <property type="entry name" value="4-HYDROXYPHENYLACETATE 3-MONOOXYGENASE-RELATED"/>
    <property type="match status" value="1"/>
</dbReference>
<dbReference type="Pfam" id="PF03241">
    <property type="entry name" value="HpaB"/>
    <property type="match status" value="1"/>
</dbReference>
<dbReference type="Pfam" id="PF11794">
    <property type="entry name" value="HpaB_N"/>
    <property type="match status" value="1"/>
</dbReference>
<dbReference type="PIRSF" id="PIRSF000331">
    <property type="entry name" value="HpaA_HpaB"/>
    <property type="match status" value="1"/>
</dbReference>
<dbReference type="SUPFAM" id="SSF47203">
    <property type="entry name" value="Acyl-CoA dehydrogenase C-terminal domain-like"/>
    <property type="match status" value="1"/>
</dbReference>
<dbReference type="SUPFAM" id="SSF56645">
    <property type="entry name" value="Acyl-CoA dehydrogenase NM domain-like"/>
    <property type="match status" value="1"/>
</dbReference>
<comment type="function">
    <text evidence="2">Utilizes FADH(2) supplied by HpaI, to catalyze the hydroxylation of 4-hydroxyphenylacetic acid, leading to the production of 3,4-dihydroxyphenylacetic acid (DHPA).</text>
</comment>
<comment type="catalytic activity">
    <reaction>
        <text>4-hydroxyphenylacetate + FADH2 + O2 = 3,4-dihydroxyphenylacetate + FAD + H2O + H(+)</text>
        <dbReference type="Rhea" id="RHEA:30595"/>
        <dbReference type="ChEBI" id="CHEBI:15377"/>
        <dbReference type="ChEBI" id="CHEBI:15378"/>
        <dbReference type="ChEBI" id="CHEBI:15379"/>
        <dbReference type="ChEBI" id="CHEBI:17612"/>
        <dbReference type="ChEBI" id="CHEBI:48999"/>
        <dbReference type="ChEBI" id="CHEBI:57692"/>
        <dbReference type="ChEBI" id="CHEBI:58307"/>
        <dbReference type="EC" id="1.14.14.9"/>
    </reaction>
</comment>
<comment type="pathway">
    <text>Aromatic compound metabolism; 4-hydroxyphenylacetate degradation; pyruvate and succinate semialdehyde from 4-hydroxyphenylacetate: step 1/7.</text>
</comment>
<comment type="subunit">
    <text>4-HPA 3-monooxygenase consists of a reductase component HpaI and an oxygenase component HpaH.</text>
</comment>
<comment type="similarity">
    <text evidence="3">Belongs to the FADH(2)-utilizing monooxygenase family.</text>
</comment>
<keyword id="KW-0058">Aromatic hydrocarbons catabolism</keyword>
<keyword id="KW-0274">FAD</keyword>
<keyword id="KW-0285">Flavoprotein</keyword>
<keyword id="KW-0503">Monooxygenase</keyword>
<keyword id="KW-0560">Oxidoreductase</keyword>
<reference key="1">
    <citation type="journal article" date="2007" name="Curr. Microbiol.">
        <title>Cloning and Characterization of a 4-Hydroxyphenylacetate 3-Hydroxylase From the Thermophile Geobacillus sp. PA-9.</title>
        <authorList>
            <person name="Hawumba J.F."/>
            <person name="Brozel V.S."/>
            <person name="Theron J."/>
        </authorList>
    </citation>
    <scope>NUCLEOTIDE SEQUENCE [GENOMIC DNA]</scope>
    <scope>FUNCTION</scope>
</reference>
<evidence type="ECO:0000250" key="1"/>
<evidence type="ECO:0000269" key="2">
    <source>
    </source>
</evidence>
<evidence type="ECO:0000305" key="3"/>
<gene>
    <name type="primary">hpaH</name>
    <name type="synonym">pheH</name>
</gene>
<sequence length="494" mass="56269">MKMPAKTGKEYMERLKQAKSSVYIHGEKVEDVTVHPAFRNVVRSMAALYDRQYEKPEKMLYRSPTTGQPVGMTFIQPTTIDELIARREATQEWARMSAGMMGRSPDYLNAEVMAMGIANDLFAEDDPMFAENAKNYYEYAREHDISLTHTLIHPQMNRAKALHEQNDADVPLHLVERRKDGIIVSGIRLLATQGGITDEILVFPSTVKKATSGEDPYALAFAIPNNTPGVKFICREAFDYGRSAWDHPLASRFEEGDAIVSFENVFVPWERVFVCGNSSICNRTFRETNAVVHMSHQVVAKNIVKTEFLLGVTLCLIEAIGIGEFQHVKDKGAEIMLVLETMKSHLYRAEHNAKRDRWGTMTPDFAALDAARNWYPRIYPRLAEIIRILGASGLMAIPTEADFQHEEIGDIVRRAMQGATVDGYERVQLFRLAWDLTMSAFGARQTHYEYYFFGDPVRMGMAYFDGYEKEPYKQFVREFLRGAKSVFIPADNKH</sequence>
<name>HPAH_GEOP9</name>
<accession>Q4L1M7</accession>
<feature type="chain" id="PRO_0000387995" description="4-hydroxyphenylacetate 3-monooxygenase oxygenase component">
    <location>
        <begin position="1"/>
        <end position="494"/>
    </location>
</feature>
<feature type="binding site" evidence="1">
    <location>
        <begin position="103"/>
        <end position="107"/>
    </location>
    <ligand>
        <name>substrate</name>
    </ligand>
</feature>
<feature type="binding site" evidence="1">
    <location>
        <begin position="149"/>
        <end position="151"/>
    </location>
    <ligand>
        <name>FAD</name>
        <dbReference type="ChEBI" id="CHEBI:57692"/>
    </ligand>
</feature>
<feature type="binding site" evidence="1">
    <location>
        <position position="149"/>
    </location>
    <ligand>
        <name>substrate</name>
    </ligand>
</feature>
<feature type="binding site" evidence="1">
    <location>
        <begin position="155"/>
        <end position="158"/>
    </location>
    <ligand>
        <name>FAD</name>
        <dbReference type="ChEBI" id="CHEBI:57692"/>
    </ligand>
</feature>
<feature type="binding site" evidence="1">
    <location>
        <position position="192"/>
    </location>
    <ligand>
        <name>FAD</name>
        <dbReference type="ChEBI" id="CHEBI:57692"/>
    </ligand>
</feature>
<feature type="binding site" evidence="1">
    <location>
        <begin position="205"/>
        <end position="206"/>
    </location>
    <ligand>
        <name>substrate</name>
    </ligand>
</feature>
<feature type="binding site" evidence="1">
    <location>
        <begin position="455"/>
        <end position="458"/>
    </location>
    <ligand>
        <name>FAD</name>
        <dbReference type="ChEBI" id="CHEBI:57692"/>
    </ligand>
</feature>